<sequence length="119" mass="14360">MLHWGPKYWRALHLYAIFFSDAPGWKEKYEAIQWILNFIESLPCTRCRHHAFSYLTKNPLTLNNSEDFQYWTFAFHNNVNNRLNKKIISWSEYKNIYEQSILKTIEYGKTDFIGAWSSL</sequence>
<feature type="chain" id="PRO_0000355537" description="FAD-linked sulfhydryl oxidase">
    <location>
        <begin position="1"/>
        <end position="119"/>
    </location>
</feature>
<feature type="domain" description="ERV/ALR sulfhydryl oxidase" evidence="3">
    <location>
        <begin position="1"/>
        <end position="97"/>
    </location>
</feature>
<feature type="disulfide bond" description="Redox-active" evidence="3">
    <location>
        <begin position="44"/>
        <end position="47"/>
    </location>
</feature>
<keyword id="KW-1015">Disulfide bond</keyword>
<keyword id="KW-0274">FAD</keyword>
<keyword id="KW-0285">Flavoprotein</keyword>
<keyword id="KW-1035">Host cytoplasm</keyword>
<keyword id="KW-0426">Late protein</keyword>
<keyword id="KW-0560">Oxidoreductase</keyword>
<keyword id="KW-0946">Virion</keyword>
<keyword id="KW-0843">Virulence</keyword>
<organism>
    <name type="scientific">African swine fever virus (isolate Warthog/Namibia/Wart80/1980)</name>
    <name type="common">ASFV</name>
    <dbReference type="NCBI Taxonomy" id="561444"/>
    <lineage>
        <taxon>Viruses</taxon>
        <taxon>Varidnaviria</taxon>
        <taxon>Bamfordvirae</taxon>
        <taxon>Nucleocytoviricota</taxon>
        <taxon>Pokkesviricetes</taxon>
        <taxon>Asfuvirales</taxon>
        <taxon>Asfarviridae</taxon>
        <taxon>Asfivirus</taxon>
        <taxon>African swine fever virus</taxon>
    </lineage>
</organism>
<dbReference type="EC" id="1.8.3.2" evidence="1"/>
<dbReference type="EMBL" id="AY261366">
    <property type="status" value="NOT_ANNOTATED_CDS"/>
    <property type="molecule type" value="Genomic_DNA"/>
</dbReference>
<dbReference type="SMR" id="P0C8G9"/>
<dbReference type="Proteomes" id="UP000000858">
    <property type="component" value="Segment"/>
</dbReference>
<dbReference type="GO" id="GO:0030430">
    <property type="term" value="C:host cell cytoplasm"/>
    <property type="evidence" value="ECO:0007669"/>
    <property type="project" value="UniProtKB-SubCell"/>
</dbReference>
<dbReference type="GO" id="GO:0044423">
    <property type="term" value="C:virion component"/>
    <property type="evidence" value="ECO:0007669"/>
    <property type="project" value="UniProtKB-KW"/>
</dbReference>
<dbReference type="GO" id="GO:0050660">
    <property type="term" value="F:flavin adenine dinucleotide binding"/>
    <property type="evidence" value="ECO:0007669"/>
    <property type="project" value="TreeGrafter"/>
</dbReference>
<dbReference type="GO" id="GO:0016971">
    <property type="term" value="F:flavin-dependent sulfhydryl oxidase activity"/>
    <property type="evidence" value="ECO:0007669"/>
    <property type="project" value="InterPro"/>
</dbReference>
<dbReference type="FunFam" id="1.20.120.310:FF:000009">
    <property type="entry name" value="FAD-linked sulfhydryl oxidase"/>
    <property type="match status" value="1"/>
</dbReference>
<dbReference type="Gene3D" id="1.20.120.310">
    <property type="entry name" value="ERV/ALR sulfhydryl oxidase domain"/>
    <property type="match status" value="1"/>
</dbReference>
<dbReference type="InterPro" id="IPR039799">
    <property type="entry name" value="ALR/ERV"/>
</dbReference>
<dbReference type="InterPro" id="IPR036774">
    <property type="entry name" value="ERV/ALR_sulphydryl_oxid_sf"/>
</dbReference>
<dbReference type="InterPro" id="IPR017905">
    <property type="entry name" value="ERV/ALR_sulphydryl_oxidase"/>
</dbReference>
<dbReference type="PANTHER" id="PTHR12645">
    <property type="entry name" value="ALR/ERV"/>
    <property type="match status" value="1"/>
</dbReference>
<dbReference type="PANTHER" id="PTHR12645:SF0">
    <property type="entry name" value="FAD-LINKED SULFHYDRYL OXIDASE ALR"/>
    <property type="match status" value="1"/>
</dbReference>
<dbReference type="Pfam" id="PF04777">
    <property type="entry name" value="Evr1_Alr"/>
    <property type="match status" value="1"/>
</dbReference>
<dbReference type="SUPFAM" id="SSF69000">
    <property type="entry name" value="FAD-dependent thiol oxidase"/>
    <property type="match status" value="1"/>
</dbReference>
<dbReference type="PROSITE" id="PS51324">
    <property type="entry name" value="ERV_ALR"/>
    <property type="match status" value="1"/>
</dbReference>
<proteinExistence type="inferred from homology"/>
<name>FLSO_ASFWA</name>
<evidence type="ECO:0000250" key="1">
    <source>
        <dbReference type="UniProtKB" id="Q65163"/>
    </source>
</evidence>
<evidence type="ECO:0000250" key="2">
    <source>
        <dbReference type="UniProtKB" id="Q9JFM9"/>
    </source>
</evidence>
<evidence type="ECO:0000255" key="3">
    <source>
        <dbReference type="PROSITE-ProRule" id="PRU00654"/>
    </source>
</evidence>
<evidence type="ECO:0000305" key="4"/>
<protein>
    <recommendedName>
        <fullName>FAD-linked sulfhydryl oxidase</fullName>
        <ecNumber evidence="1">1.8.3.2</ecNumber>
    </recommendedName>
    <alternativeName>
        <fullName evidence="1">p14</fullName>
    </alternativeName>
</protein>
<gene>
    <name type="ordered locus">War-083</name>
</gene>
<comment type="function">
    <text evidence="2 3">FAD-dependent sulfhydryl oxidase that catalyzes the formation of disulfide bonds in viral proteins produced in the cell cytoplasm (By similarity). Involved in virion maturation (By similarity).</text>
</comment>
<comment type="catalytic activity">
    <reaction evidence="1">
        <text>2 R'C(R)SH + O2 = R'C(R)S-S(R)CR' + H2O2</text>
        <dbReference type="Rhea" id="RHEA:17357"/>
        <dbReference type="ChEBI" id="CHEBI:15379"/>
        <dbReference type="ChEBI" id="CHEBI:16240"/>
        <dbReference type="ChEBI" id="CHEBI:16520"/>
        <dbReference type="ChEBI" id="CHEBI:17412"/>
        <dbReference type="EC" id="1.8.3.2"/>
    </reaction>
</comment>
<comment type="cofactor">
    <cofactor evidence="3">
        <name>FAD</name>
        <dbReference type="ChEBI" id="CHEBI:57692"/>
    </cofactor>
</comment>
<comment type="subunit">
    <text evidence="1">Interacts with A151R.</text>
</comment>
<comment type="subcellular location">
    <subcellularLocation>
        <location evidence="1">Host cytoplasm</location>
    </subcellularLocation>
    <subcellularLocation>
        <location evidence="1">Virion</location>
    </subcellularLocation>
</comment>
<comment type="induction">
    <text evidence="4">Expressed in the late phase of the viral replicative cycle.</text>
</comment>
<comment type="similarity">
    <text evidence="4">Belongs to the asfivirus B119L family.</text>
</comment>
<organismHost>
    <name type="scientific">Ornithodoros</name>
    <name type="common">relapsing fever ticks</name>
    <dbReference type="NCBI Taxonomy" id="6937"/>
</organismHost>
<organismHost>
    <name type="scientific">Phacochoerus aethiopicus</name>
    <name type="common">Warthog</name>
    <dbReference type="NCBI Taxonomy" id="85517"/>
</organismHost>
<organismHost>
    <name type="scientific">Phacochoerus africanus</name>
    <name type="common">Warthog</name>
    <dbReference type="NCBI Taxonomy" id="41426"/>
</organismHost>
<organismHost>
    <name type="scientific">Potamochoerus larvatus</name>
    <name type="common">Bushpig</name>
    <dbReference type="NCBI Taxonomy" id="273792"/>
</organismHost>
<organismHost>
    <name type="scientific">Sus scrofa</name>
    <name type="common">Pig</name>
    <dbReference type="NCBI Taxonomy" id="9823"/>
</organismHost>
<accession>P0C8G9</accession>
<reference key="1">
    <citation type="submission" date="2003-03" db="EMBL/GenBank/DDBJ databases">
        <title>African swine fever virus genomes.</title>
        <authorList>
            <person name="Kutish G.F."/>
            <person name="Rock D.L."/>
        </authorList>
    </citation>
    <scope>NUCLEOTIDE SEQUENCE [LARGE SCALE GENOMIC DNA]</scope>
</reference>